<keyword id="KW-1185">Reference proteome</keyword>
<keyword id="KW-0732">Signal</keyword>
<evidence type="ECO:0000255" key="1"/>
<protein>
    <recommendedName>
        <fullName>Uncharacterized protein YbjH</fullName>
    </recommendedName>
</protein>
<organism>
    <name type="scientific">Shigella flexneri</name>
    <dbReference type="NCBI Taxonomy" id="623"/>
    <lineage>
        <taxon>Bacteria</taxon>
        <taxon>Pseudomonadati</taxon>
        <taxon>Pseudomonadota</taxon>
        <taxon>Gammaproteobacteria</taxon>
        <taxon>Enterobacterales</taxon>
        <taxon>Enterobacteriaceae</taxon>
        <taxon>Shigella</taxon>
    </lineage>
</organism>
<feature type="signal peptide" evidence="1">
    <location>
        <begin position="1"/>
        <end position="22"/>
    </location>
</feature>
<feature type="chain" id="PRO_0000042568" description="Uncharacterized protein YbjH">
    <location>
        <begin position="23"/>
        <end position="94"/>
    </location>
</feature>
<name>YBJH_SHIFL</name>
<dbReference type="EMBL" id="AE005674">
    <property type="protein sequence ID" value="AAN42429.1"/>
    <property type="molecule type" value="Genomic_DNA"/>
</dbReference>
<dbReference type="EMBL" id="AE014073">
    <property type="protein sequence ID" value="AAP16302.1"/>
    <property type="molecule type" value="Genomic_DNA"/>
</dbReference>
<dbReference type="RefSeq" id="NP_706722.1">
    <property type="nucleotide sequence ID" value="NC_004337.2"/>
</dbReference>
<dbReference type="RefSeq" id="WP_000605480.1">
    <property type="nucleotide sequence ID" value="NZ_WPGW01000056.1"/>
</dbReference>
<dbReference type="STRING" id="198214.SF0796"/>
<dbReference type="PaxDb" id="198214-SF0796"/>
<dbReference type="GeneID" id="1023747"/>
<dbReference type="KEGG" id="sfl:SF0796"/>
<dbReference type="KEGG" id="sfx:S0839"/>
<dbReference type="PATRIC" id="fig|198214.7.peg.924"/>
<dbReference type="HOGENOM" id="CLU_2436353_0_0_6"/>
<dbReference type="Proteomes" id="UP000001006">
    <property type="component" value="Chromosome"/>
</dbReference>
<dbReference type="Proteomes" id="UP000002673">
    <property type="component" value="Chromosome"/>
</dbReference>
<accession>P0AAY5</accession>
<accession>P75808</accession>
<gene>
    <name type="primary">ybjH</name>
    <name type="ordered locus">SF0796</name>
    <name type="ordered locus">S0839</name>
</gene>
<sequence>MIMKNCLLLGALLMGFTGVAMAQSVTVDVPSGYKVVVVPDSVSVPQAVSVATVPQTVYVAPAPAPAYRPHPYVRHLASVGEGMVIEHQIDDHHH</sequence>
<reference key="1">
    <citation type="journal article" date="2002" name="Nucleic Acids Res.">
        <title>Genome sequence of Shigella flexneri 2a: insights into pathogenicity through comparison with genomes of Escherichia coli K12 and O157.</title>
        <authorList>
            <person name="Jin Q."/>
            <person name="Yuan Z."/>
            <person name="Xu J."/>
            <person name="Wang Y."/>
            <person name="Shen Y."/>
            <person name="Lu W."/>
            <person name="Wang J."/>
            <person name="Liu H."/>
            <person name="Yang J."/>
            <person name="Yang F."/>
            <person name="Zhang X."/>
            <person name="Zhang J."/>
            <person name="Yang G."/>
            <person name="Wu H."/>
            <person name="Qu D."/>
            <person name="Dong J."/>
            <person name="Sun L."/>
            <person name="Xue Y."/>
            <person name="Zhao A."/>
            <person name="Gao Y."/>
            <person name="Zhu J."/>
            <person name="Kan B."/>
            <person name="Ding K."/>
            <person name="Chen S."/>
            <person name="Cheng H."/>
            <person name="Yao Z."/>
            <person name="He B."/>
            <person name="Chen R."/>
            <person name="Ma D."/>
            <person name="Qiang B."/>
            <person name="Wen Y."/>
            <person name="Hou Y."/>
            <person name="Yu J."/>
        </authorList>
    </citation>
    <scope>NUCLEOTIDE SEQUENCE [LARGE SCALE GENOMIC DNA]</scope>
    <source>
        <strain>301 / Serotype 2a</strain>
    </source>
</reference>
<reference key="2">
    <citation type="journal article" date="2003" name="Infect. Immun.">
        <title>Complete genome sequence and comparative genomics of Shigella flexneri serotype 2a strain 2457T.</title>
        <authorList>
            <person name="Wei J."/>
            <person name="Goldberg M.B."/>
            <person name="Burland V."/>
            <person name="Venkatesan M.M."/>
            <person name="Deng W."/>
            <person name="Fournier G."/>
            <person name="Mayhew G.F."/>
            <person name="Plunkett G. III"/>
            <person name="Rose D.J."/>
            <person name="Darling A."/>
            <person name="Mau B."/>
            <person name="Perna N.T."/>
            <person name="Payne S.M."/>
            <person name="Runyen-Janecky L.J."/>
            <person name="Zhou S."/>
            <person name="Schwartz D.C."/>
            <person name="Blattner F.R."/>
        </authorList>
    </citation>
    <scope>NUCLEOTIDE SEQUENCE [LARGE SCALE GENOMIC DNA]</scope>
    <source>
        <strain>ATCC 700930 / 2457T / Serotype 2a</strain>
    </source>
</reference>
<proteinExistence type="inferred from homology"/>